<evidence type="ECO:0000250" key="1">
    <source>
        <dbReference type="UniProtKB" id="Q86Y39"/>
    </source>
</evidence>
<evidence type="ECO:0000250" key="2">
    <source>
        <dbReference type="UniProtKB" id="Q8HXG6"/>
    </source>
</evidence>
<evidence type="ECO:0000255" key="3"/>
<evidence type="ECO:0000305" key="4"/>
<gene>
    <name type="primary">Ndufa11</name>
</gene>
<feature type="initiator methionine" description="Removed" evidence="2">
    <location>
        <position position="1"/>
    </location>
</feature>
<feature type="chain" id="PRO_0000118843" description="NADH dehydrogenase [ubiquinone] 1 alpha subcomplex subunit 11">
    <location>
        <begin position="2"/>
        <end position="141"/>
    </location>
</feature>
<feature type="transmembrane region" description="Helical" evidence="3">
    <location>
        <begin position="21"/>
        <end position="43"/>
    </location>
</feature>
<feature type="transmembrane region" description="Helical" evidence="3">
    <location>
        <begin position="58"/>
        <end position="80"/>
    </location>
</feature>
<feature type="modified residue" description="N-acetylalanine" evidence="2">
    <location>
        <position position="2"/>
    </location>
</feature>
<name>NDUAB_RAT</name>
<keyword id="KW-0007">Acetylation</keyword>
<keyword id="KW-0249">Electron transport</keyword>
<keyword id="KW-0472">Membrane</keyword>
<keyword id="KW-0496">Mitochondrion</keyword>
<keyword id="KW-0999">Mitochondrion inner membrane</keyword>
<keyword id="KW-1185">Reference proteome</keyword>
<keyword id="KW-0679">Respiratory chain</keyword>
<keyword id="KW-0812">Transmembrane</keyword>
<keyword id="KW-1133">Transmembrane helix</keyword>
<keyword id="KW-0813">Transport</keyword>
<dbReference type="EMBL" id="AY272059">
    <property type="protein sequence ID" value="AAP32478.1"/>
    <property type="molecule type" value="mRNA"/>
</dbReference>
<dbReference type="RefSeq" id="NP_997682.1">
    <property type="nucleotide sequence ID" value="NM_212517.1"/>
</dbReference>
<dbReference type="SMR" id="Q80W89"/>
<dbReference type="BioGRID" id="256851">
    <property type="interactions" value="1"/>
</dbReference>
<dbReference type="FunCoup" id="Q80W89">
    <property type="interactions" value="1739"/>
</dbReference>
<dbReference type="STRING" id="10116.ENSRNOP00000064246"/>
<dbReference type="iPTMnet" id="Q80W89"/>
<dbReference type="PhosphoSitePlus" id="Q80W89"/>
<dbReference type="jPOST" id="Q80W89"/>
<dbReference type="PaxDb" id="10116-ENSRNOP00000064246"/>
<dbReference type="GeneID" id="301123"/>
<dbReference type="KEGG" id="rno:301123"/>
<dbReference type="AGR" id="RGD:1303292"/>
<dbReference type="CTD" id="126328"/>
<dbReference type="RGD" id="1303292">
    <property type="gene designation" value="Ndufa11"/>
</dbReference>
<dbReference type="VEuPathDB" id="HostDB:ENSRNOG00000048320"/>
<dbReference type="eggNOG" id="ENOG502S6F6">
    <property type="taxonomic scope" value="Eukaryota"/>
</dbReference>
<dbReference type="HOGENOM" id="CLU_134185_2_0_1"/>
<dbReference type="InParanoid" id="Q80W89"/>
<dbReference type="OrthoDB" id="70917at9989"/>
<dbReference type="PhylomeDB" id="Q80W89"/>
<dbReference type="Reactome" id="R-RNO-611105">
    <property type="pathway name" value="Respiratory electron transport"/>
</dbReference>
<dbReference type="Reactome" id="R-RNO-6799198">
    <property type="pathway name" value="Complex I biogenesis"/>
</dbReference>
<dbReference type="PRO" id="PR:Q80W89"/>
<dbReference type="Proteomes" id="UP000002494">
    <property type="component" value="Chromosome 9"/>
</dbReference>
<dbReference type="Bgee" id="ENSRNOG00000048320">
    <property type="expression patterns" value="Expressed in heart and 20 other cell types or tissues"/>
</dbReference>
<dbReference type="GO" id="GO:0005743">
    <property type="term" value="C:mitochondrial inner membrane"/>
    <property type="evidence" value="ECO:0000266"/>
    <property type="project" value="RGD"/>
</dbReference>
<dbReference type="GO" id="GO:0005739">
    <property type="term" value="C:mitochondrion"/>
    <property type="evidence" value="ECO:0000250"/>
    <property type="project" value="UniProtKB"/>
</dbReference>
<dbReference type="GO" id="GO:0045271">
    <property type="term" value="C:respiratory chain complex I"/>
    <property type="evidence" value="ECO:0000250"/>
    <property type="project" value="UniProtKB"/>
</dbReference>
<dbReference type="GO" id="GO:0006120">
    <property type="term" value="P:mitochondrial electron transport, NADH to ubiquinone"/>
    <property type="evidence" value="ECO:0007669"/>
    <property type="project" value="InterPro"/>
</dbReference>
<dbReference type="InterPro" id="IPR039205">
    <property type="entry name" value="NDUFA11"/>
</dbReference>
<dbReference type="PANTHER" id="PTHR21382:SF1">
    <property type="entry name" value="NADH DEHYDROGENASE [UBIQUINONE] 1 ALPHA SUBCOMPLEX SUBUNIT 11"/>
    <property type="match status" value="1"/>
</dbReference>
<dbReference type="PANTHER" id="PTHR21382">
    <property type="entry name" value="NADH-UBIQUINONE OXIDOREDUCTASE SUBUNIT"/>
    <property type="match status" value="1"/>
</dbReference>
<dbReference type="Pfam" id="PF02466">
    <property type="entry name" value="Tim17"/>
    <property type="match status" value="1"/>
</dbReference>
<proteinExistence type="evidence at transcript level"/>
<organism>
    <name type="scientific">Rattus norvegicus</name>
    <name type="common">Rat</name>
    <dbReference type="NCBI Taxonomy" id="10116"/>
    <lineage>
        <taxon>Eukaryota</taxon>
        <taxon>Metazoa</taxon>
        <taxon>Chordata</taxon>
        <taxon>Craniata</taxon>
        <taxon>Vertebrata</taxon>
        <taxon>Euteleostomi</taxon>
        <taxon>Mammalia</taxon>
        <taxon>Eutheria</taxon>
        <taxon>Euarchontoglires</taxon>
        <taxon>Glires</taxon>
        <taxon>Rodentia</taxon>
        <taxon>Myomorpha</taxon>
        <taxon>Muroidea</taxon>
        <taxon>Muridae</taxon>
        <taxon>Murinae</taxon>
        <taxon>Rattus</taxon>
    </lineage>
</organism>
<comment type="function">
    <text evidence="1">Accessory subunit of the mitochondrial membrane respiratory chain NADH dehydrogenase (Complex I), that is believed not to be involved in catalysis. Complex I functions in the transfer of electrons from NADH to the respiratory chain. The immediate electron acceptor for the enzyme is believed to be ubiquinone.</text>
</comment>
<comment type="subunit">
    <text evidence="1">Complex I is composed of 45 different subunits.</text>
</comment>
<comment type="subcellular location">
    <subcellularLocation>
        <location evidence="1">Mitochondrion inner membrane</location>
        <topology evidence="3">Multi-pass membrane protein</topology>
        <orientation evidence="1">Matrix side</orientation>
    </subcellularLocation>
</comment>
<comment type="similarity">
    <text evidence="4">Belongs to the complex I NDUFA11 subunit family.</text>
</comment>
<protein>
    <recommendedName>
        <fullName>NADH dehydrogenase [ubiquinone] 1 alpha subcomplex subunit 11</fullName>
    </recommendedName>
    <alternativeName>
        <fullName>Complex I-B14.7</fullName>
        <shortName>CI-B14.7</shortName>
    </alternativeName>
    <alternativeName>
        <fullName>NADH-ubiquinone oxidoreductase subunit B14.7</fullName>
    </alternativeName>
</protein>
<reference key="1">
    <citation type="submission" date="2003-04" db="EMBL/GenBank/DDBJ databases">
        <authorList>
            <person name="Guo X."/>
            <person name="Gong H."/>
            <person name="Fei L."/>
            <person name="Ni Y."/>
            <person name="Chen R."/>
        </authorList>
    </citation>
    <scope>NUCLEOTIDE SEQUENCE [MRNA]</scope>
    <source>
        <strain>Sprague-Dawley</strain>
    </source>
</reference>
<accession>Q80W89</accession>
<sequence length="141" mass="14854">MAKRFFEAYNETPDGTQCHRKAYITTALGGLCGLISSAYSITHNPADSPLEAVARVGRFTFTAAAIGAMFGLTTCVSAQVREKPDDPLNYFIGGCAGGLTLGARTHSYGTAAIGCVYMGTAAALFKMGKLEGWELFATPKV</sequence>